<proteinExistence type="inferred from homology"/>
<protein>
    <recommendedName>
        <fullName evidence="1">Pyridoxal phosphate homeostasis protein</fullName>
        <shortName evidence="1">PLP homeostasis protein</shortName>
    </recommendedName>
</protein>
<keyword id="KW-0663">Pyridoxal phosphate</keyword>
<keyword id="KW-1185">Reference proteome</keyword>
<name>PLPHP_AQUAE</name>
<accession>O66631</accession>
<evidence type="ECO:0000255" key="1">
    <source>
        <dbReference type="HAMAP-Rule" id="MF_02087"/>
    </source>
</evidence>
<sequence length="228" mass="26339">MNACERLSRVLERIQKACERAGRGENCAKLLGASKTVPPEVIREFYNCGLKVYGENRVQEFLKKYEALKDLDLEWHFIGRLQTNKVKYLMGKVVLIHSLDRKNLADEIQKRAFKNNIVQDVLIEVNVGGEETKGGVEPENLKELFEYTLELPNVKVLGLMTIPPYLENPEDVRPYFRKLRELRDELQREYNVALPHLSMGMSHDFEVAIEEGATIVRIGTLLFGERKY</sequence>
<gene>
    <name type="ordered locus">aq_274</name>
</gene>
<comment type="function">
    <text evidence="1">Pyridoxal 5'-phosphate (PLP)-binding protein, which is involved in PLP homeostasis.</text>
</comment>
<comment type="similarity">
    <text evidence="1">Belongs to the pyridoxal phosphate-binding protein YggS/PROSC family.</text>
</comment>
<organism>
    <name type="scientific">Aquifex aeolicus (strain VF5)</name>
    <dbReference type="NCBI Taxonomy" id="224324"/>
    <lineage>
        <taxon>Bacteria</taxon>
        <taxon>Pseudomonadati</taxon>
        <taxon>Aquificota</taxon>
        <taxon>Aquificia</taxon>
        <taxon>Aquificales</taxon>
        <taxon>Aquificaceae</taxon>
        <taxon>Aquifex</taxon>
    </lineage>
</organism>
<dbReference type="EMBL" id="AE000657">
    <property type="protein sequence ID" value="AAC06592.1"/>
    <property type="molecule type" value="Genomic_DNA"/>
</dbReference>
<dbReference type="PIR" id="C70325">
    <property type="entry name" value="C70325"/>
</dbReference>
<dbReference type="RefSeq" id="NP_213191.1">
    <property type="nucleotide sequence ID" value="NC_000918.1"/>
</dbReference>
<dbReference type="RefSeq" id="WP_010880129.1">
    <property type="nucleotide sequence ID" value="NC_000918.1"/>
</dbReference>
<dbReference type="SMR" id="O66631"/>
<dbReference type="FunCoup" id="O66631">
    <property type="interactions" value="414"/>
</dbReference>
<dbReference type="STRING" id="224324.aq_274"/>
<dbReference type="EnsemblBacteria" id="AAC06592">
    <property type="protein sequence ID" value="AAC06592"/>
    <property type="gene ID" value="aq_274"/>
</dbReference>
<dbReference type="KEGG" id="aae:aq_274"/>
<dbReference type="PATRIC" id="fig|224324.8.peg.228"/>
<dbReference type="eggNOG" id="COG0325">
    <property type="taxonomic scope" value="Bacteria"/>
</dbReference>
<dbReference type="HOGENOM" id="CLU_059988_1_0_0"/>
<dbReference type="InParanoid" id="O66631"/>
<dbReference type="OrthoDB" id="9804072at2"/>
<dbReference type="Proteomes" id="UP000000798">
    <property type="component" value="Chromosome"/>
</dbReference>
<dbReference type="GO" id="GO:0005737">
    <property type="term" value="C:cytoplasm"/>
    <property type="evidence" value="ECO:0000318"/>
    <property type="project" value="GO_Central"/>
</dbReference>
<dbReference type="GO" id="GO:0030170">
    <property type="term" value="F:pyridoxal phosphate binding"/>
    <property type="evidence" value="ECO:0000318"/>
    <property type="project" value="GO_Central"/>
</dbReference>
<dbReference type="CDD" id="cd00635">
    <property type="entry name" value="PLPDE_III_YBL036c_like"/>
    <property type="match status" value="1"/>
</dbReference>
<dbReference type="FunFam" id="3.20.20.10:FF:000011">
    <property type="entry name" value="Pyridoxal phosphate homeostasis protein"/>
    <property type="match status" value="1"/>
</dbReference>
<dbReference type="Gene3D" id="3.20.20.10">
    <property type="entry name" value="Alanine racemase"/>
    <property type="match status" value="1"/>
</dbReference>
<dbReference type="HAMAP" id="MF_02087">
    <property type="entry name" value="PLP_homeostasis"/>
    <property type="match status" value="1"/>
</dbReference>
<dbReference type="InterPro" id="IPR001608">
    <property type="entry name" value="Ala_racemase_N"/>
</dbReference>
<dbReference type="InterPro" id="IPR029066">
    <property type="entry name" value="PLP-binding_barrel"/>
</dbReference>
<dbReference type="InterPro" id="IPR011078">
    <property type="entry name" value="PyrdxlP_homeostasis"/>
</dbReference>
<dbReference type="NCBIfam" id="TIGR00044">
    <property type="entry name" value="YggS family pyridoxal phosphate-dependent enzyme"/>
    <property type="match status" value="1"/>
</dbReference>
<dbReference type="PANTHER" id="PTHR10146">
    <property type="entry name" value="PROLINE SYNTHETASE CO-TRANSCRIBED BACTERIAL HOMOLOG PROTEIN"/>
    <property type="match status" value="1"/>
</dbReference>
<dbReference type="PANTHER" id="PTHR10146:SF14">
    <property type="entry name" value="PYRIDOXAL PHOSPHATE HOMEOSTASIS PROTEIN"/>
    <property type="match status" value="1"/>
</dbReference>
<dbReference type="Pfam" id="PF01168">
    <property type="entry name" value="Ala_racemase_N"/>
    <property type="match status" value="1"/>
</dbReference>
<dbReference type="PIRSF" id="PIRSF004848">
    <property type="entry name" value="YBL036c_PLPDEIII"/>
    <property type="match status" value="1"/>
</dbReference>
<dbReference type="SUPFAM" id="SSF51419">
    <property type="entry name" value="PLP-binding barrel"/>
    <property type="match status" value="1"/>
</dbReference>
<dbReference type="PROSITE" id="PS01211">
    <property type="entry name" value="UPF0001"/>
    <property type="match status" value="1"/>
</dbReference>
<feature type="chain" id="PRO_0000163189" description="Pyridoxal phosphate homeostasis protein">
    <location>
        <begin position="1"/>
        <end position="228"/>
    </location>
</feature>
<feature type="modified residue" description="N6-(pyridoxal phosphate)lysine" evidence="1">
    <location>
        <position position="35"/>
    </location>
</feature>
<reference key="1">
    <citation type="journal article" date="1998" name="Nature">
        <title>The complete genome of the hyperthermophilic bacterium Aquifex aeolicus.</title>
        <authorList>
            <person name="Deckert G."/>
            <person name="Warren P.V."/>
            <person name="Gaasterland T."/>
            <person name="Young W.G."/>
            <person name="Lenox A.L."/>
            <person name="Graham D.E."/>
            <person name="Overbeek R."/>
            <person name="Snead M.A."/>
            <person name="Keller M."/>
            <person name="Aujay M."/>
            <person name="Huber R."/>
            <person name="Feldman R.A."/>
            <person name="Short J.M."/>
            <person name="Olsen G.J."/>
            <person name="Swanson R.V."/>
        </authorList>
    </citation>
    <scope>NUCLEOTIDE SEQUENCE [LARGE SCALE GENOMIC DNA]</scope>
    <source>
        <strain>VF5</strain>
    </source>
</reference>